<dbReference type="EC" id="3.1.11.6" evidence="1"/>
<dbReference type="EMBL" id="CP000241">
    <property type="protein sequence ID" value="ABF84328.1"/>
    <property type="molecule type" value="Genomic_DNA"/>
</dbReference>
<dbReference type="RefSeq" id="WP_000382856.1">
    <property type="nucleotide sequence ID" value="NC_008086.1"/>
</dbReference>
<dbReference type="SMR" id="Q1CUP4"/>
<dbReference type="KEGG" id="hpa:HPAG1_0261"/>
<dbReference type="HOGENOM" id="CLU_023625_2_0_7"/>
<dbReference type="GO" id="GO:0005737">
    <property type="term" value="C:cytoplasm"/>
    <property type="evidence" value="ECO:0007669"/>
    <property type="project" value="UniProtKB-SubCell"/>
</dbReference>
<dbReference type="GO" id="GO:0009318">
    <property type="term" value="C:exodeoxyribonuclease VII complex"/>
    <property type="evidence" value="ECO:0007669"/>
    <property type="project" value="InterPro"/>
</dbReference>
<dbReference type="GO" id="GO:0008855">
    <property type="term" value="F:exodeoxyribonuclease VII activity"/>
    <property type="evidence" value="ECO:0007669"/>
    <property type="project" value="UniProtKB-UniRule"/>
</dbReference>
<dbReference type="GO" id="GO:0003676">
    <property type="term" value="F:nucleic acid binding"/>
    <property type="evidence" value="ECO:0007669"/>
    <property type="project" value="InterPro"/>
</dbReference>
<dbReference type="GO" id="GO:0006308">
    <property type="term" value="P:DNA catabolic process"/>
    <property type="evidence" value="ECO:0007669"/>
    <property type="project" value="UniProtKB-UniRule"/>
</dbReference>
<dbReference type="CDD" id="cd04489">
    <property type="entry name" value="ExoVII_LU_OBF"/>
    <property type="match status" value="1"/>
</dbReference>
<dbReference type="Gene3D" id="2.40.50.1010">
    <property type="match status" value="1"/>
</dbReference>
<dbReference type="HAMAP" id="MF_00378">
    <property type="entry name" value="Exonuc_7_L"/>
    <property type="match status" value="1"/>
</dbReference>
<dbReference type="InterPro" id="IPR003753">
    <property type="entry name" value="Exonuc_VII_L"/>
</dbReference>
<dbReference type="InterPro" id="IPR020579">
    <property type="entry name" value="Exonuc_VII_lsu_C"/>
</dbReference>
<dbReference type="InterPro" id="IPR025824">
    <property type="entry name" value="OB-fold_nuc-bd_dom"/>
</dbReference>
<dbReference type="NCBIfam" id="TIGR00237">
    <property type="entry name" value="xseA"/>
    <property type="match status" value="1"/>
</dbReference>
<dbReference type="PANTHER" id="PTHR30008">
    <property type="entry name" value="EXODEOXYRIBONUCLEASE 7 LARGE SUBUNIT"/>
    <property type="match status" value="1"/>
</dbReference>
<dbReference type="PANTHER" id="PTHR30008:SF0">
    <property type="entry name" value="EXODEOXYRIBONUCLEASE 7 LARGE SUBUNIT"/>
    <property type="match status" value="1"/>
</dbReference>
<dbReference type="Pfam" id="PF02601">
    <property type="entry name" value="Exonuc_VII_L"/>
    <property type="match status" value="1"/>
</dbReference>
<dbReference type="Pfam" id="PF13742">
    <property type="entry name" value="tRNA_anti_2"/>
    <property type="match status" value="1"/>
</dbReference>
<name>EX7L_HELPH</name>
<keyword id="KW-0963">Cytoplasm</keyword>
<keyword id="KW-0269">Exonuclease</keyword>
<keyword id="KW-0378">Hydrolase</keyword>
<keyword id="KW-0540">Nuclease</keyword>
<gene>
    <name evidence="1" type="primary">xseA</name>
    <name type="ordered locus">HPAG1_0261</name>
</gene>
<sequence length="420" mass="47216">MDVLSVSEINAQIKALLEATFLQVRVQGEVSNLTIHKVSGHAYFSLKDSQSVIRCVLFKGNANRLKFALKEGQEMVVFGGISVYVPRGDYQINCFEIEPKEIGSLTLALEQLKEKLRLKGYFDKENKLPKPHFPKRVAVITSQNSAAWADMQKIASKRWPICELVCINTLMQGEGCVQSVVESIAYADSFHDTRNAFDAIVVARGGGSMEDLYSFNDEKIADALYLAKTFSMSAIGHESDFLLSDLVADLRASTPSNAMEILLPSSDEWLQRLDGFNVKLHRSFKILLHQKKAHLEHLADFLKRLSFENKHHLNALKLEQLKIALENKTLEFLRFKKTLLEKISTQALTSPFLQTKTERLNRLENALKLAHANLKLPQFGAFLSKNNQAIELEALKAGDKIELSNEKARASAEILSVDRV</sequence>
<evidence type="ECO:0000255" key="1">
    <source>
        <dbReference type="HAMAP-Rule" id="MF_00378"/>
    </source>
</evidence>
<reference key="1">
    <citation type="journal article" date="2006" name="Proc. Natl. Acad. Sci. U.S.A.">
        <title>The complete genome sequence of a chronic atrophic gastritis Helicobacter pylori strain: evolution during disease progression.</title>
        <authorList>
            <person name="Oh J.D."/>
            <person name="Kling-Baeckhed H."/>
            <person name="Giannakis M."/>
            <person name="Xu J."/>
            <person name="Fulton R.S."/>
            <person name="Fulton L.A."/>
            <person name="Cordum H.S."/>
            <person name="Wang C."/>
            <person name="Elliott G."/>
            <person name="Edwards J."/>
            <person name="Mardis E.R."/>
            <person name="Engstrand L.G."/>
            <person name="Gordon J.I."/>
        </authorList>
    </citation>
    <scope>NUCLEOTIDE SEQUENCE [LARGE SCALE GENOMIC DNA]</scope>
    <source>
        <strain>HPAG1</strain>
    </source>
</reference>
<comment type="function">
    <text evidence="1">Bidirectionally degrades single-stranded DNA into large acid-insoluble oligonucleotides, which are then degraded further into small acid-soluble oligonucleotides.</text>
</comment>
<comment type="catalytic activity">
    <reaction evidence="1">
        <text>Exonucleolytic cleavage in either 5'- to 3'- or 3'- to 5'-direction to yield nucleoside 5'-phosphates.</text>
        <dbReference type="EC" id="3.1.11.6"/>
    </reaction>
</comment>
<comment type="subunit">
    <text evidence="1">Heterooligomer composed of large and small subunits.</text>
</comment>
<comment type="subcellular location">
    <subcellularLocation>
        <location evidence="1">Cytoplasm</location>
    </subcellularLocation>
</comment>
<comment type="similarity">
    <text evidence="1">Belongs to the XseA family.</text>
</comment>
<proteinExistence type="inferred from homology"/>
<protein>
    <recommendedName>
        <fullName evidence="1">Exodeoxyribonuclease 7 large subunit</fullName>
        <ecNumber evidence="1">3.1.11.6</ecNumber>
    </recommendedName>
    <alternativeName>
        <fullName evidence="1">Exodeoxyribonuclease VII large subunit</fullName>
        <shortName evidence="1">Exonuclease VII large subunit</shortName>
    </alternativeName>
</protein>
<feature type="chain" id="PRO_0000273661" description="Exodeoxyribonuclease 7 large subunit">
    <location>
        <begin position="1"/>
        <end position="420"/>
    </location>
</feature>
<organism>
    <name type="scientific">Helicobacter pylori (strain HPAG1)</name>
    <dbReference type="NCBI Taxonomy" id="357544"/>
    <lineage>
        <taxon>Bacteria</taxon>
        <taxon>Pseudomonadati</taxon>
        <taxon>Campylobacterota</taxon>
        <taxon>Epsilonproteobacteria</taxon>
        <taxon>Campylobacterales</taxon>
        <taxon>Helicobacteraceae</taxon>
        <taxon>Helicobacter</taxon>
    </lineage>
</organism>
<accession>Q1CUP4</accession>